<dbReference type="EMBL" id="CP000253">
    <property type="protein sequence ID" value="ABD30826.1"/>
    <property type="molecule type" value="Genomic_DNA"/>
</dbReference>
<dbReference type="RefSeq" id="WP_000457386.1">
    <property type="nucleotide sequence ID" value="NZ_LS483365.1"/>
</dbReference>
<dbReference type="RefSeq" id="YP_500262.1">
    <property type="nucleotide sequence ID" value="NC_007795.1"/>
</dbReference>
<dbReference type="PDB" id="4WCE">
    <property type="method" value="X-ray"/>
    <property type="resolution" value="3.53 A"/>
    <property type="chains" value="O=1-102"/>
</dbReference>
<dbReference type="PDB" id="4WF9">
    <property type="method" value="X-ray"/>
    <property type="resolution" value="3.43 A"/>
    <property type="chains" value="O=1-102"/>
</dbReference>
<dbReference type="PDB" id="4WFA">
    <property type="method" value="X-ray"/>
    <property type="resolution" value="3.39 A"/>
    <property type="chains" value="O=1-102"/>
</dbReference>
<dbReference type="PDB" id="4WFB">
    <property type="method" value="X-ray"/>
    <property type="resolution" value="3.43 A"/>
    <property type="chains" value="O=1-102"/>
</dbReference>
<dbReference type="PDB" id="5HKV">
    <property type="method" value="X-ray"/>
    <property type="resolution" value="3.66 A"/>
    <property type="chains" value="O=1-102"/>
</dbReference>
<dbReference type="PDB" id="5HL7">
    <property type="method" value="X-ray"/>
    <property type="resolution" value="3.55 A"/>
    <property type="chains" value="O=1-102"/>
</dbReference>
<dbReference type="PDB" id="5LI0">
    <property type="method" value="EM"/>
    <property type="resolution" value="3.80 A"/>
    <property type="chains" value="U=1-102"/>
</dbReference>
<dbReference type="PDB" id="5ND8">
    <property type="method" value="EM"/>
    <property type="resolution" value="3.70 A"/>
    <property type="chains" value="U=1-102"/>
</dbReference>
<dbReference type="PDB" id="5ND9">
    <property type="method" value="EM"/>
    <property type="resolution" value="3.70 A"/>
    <property type="chains" value="U=1-102"/>
</dbReference>
<dbReference type="PDB" id="5NRG">
    <property type="method" value="X-ray"/>
    <property type="resolution" value="3.44 A"/>
    <property type="chains" value="O=1-102"/>
</dbReference>
<dbReference type="PDB" id="5TCU">
    <property type="method" value="EM"/>
    <property type="resolution" value="3.90 A"/>
    <property type="chains" value="L4=1-102"/>
</dbReference>
<dbReference type="PDB" id="6DDD">
    <property type="method" value="EM"/>
    <property type="resolution" value="3.10 A"/>
    <property type="chains" value="D=1-102"/>
</dbReference>
<dbReference type="PDB" id="6DDG">
    <property type="method" value="EM"/>
    <property type="resolution" value="3.10 A"/>
    <property type="chains" value="D=1-102"/>
</dbReference>
<dbReference type="PDB" id="6HMA">
    <property type="method" value="EM"/>
    <property type="resolution" value="2.65 A"/>
    <property type="chains" value="P=1-102"/>
</dbReference>
<dbReference type="PDB" id="6SJ6">
    <property type="method" value="EM"/>
    <property type="resolution" value="3.23 A"/>
    <property type="chains" value="U=1-102"/>
</dbReference>
<dbReference type="PDB" id="6WQN">
    <property type="method" value="EM"/>
    <property type="resolution" value="2.90 A"/>
    <property type="chains" value="D=1-102"/>
</dbReference>
<dbReference type="PDB" id="6WQQ">
    <property type="method" value="EM"/>
    <property type="resolution" value="3.10 A"/>
    <property type="chains" value="D=1-102"/>
</dbReference>
<dbReference type="PDB" id="6WRS">
    <property type="method" value="EM"/>
    <property type="resolution" value="3.20 A"/>
    <property type="chains" value="D=1-102"/>
</dbReference>
<dbReference type="PDB" id="6WRU">
    <property type="method" value="EM"/>
    <property type="resolution" value="3.10 A"/>
    <property type="chains" value="D=1-102"/>
</dbReference>
<dbReference type="PDB" id="6YEF">
    <property type="method" value="EM"/>
    <property type="resolution" value="3.20 A"/>
    <property type="chains" value="U=1-102"/>
</dbReference>
<dbReference type="PDB" id="7ASM">
    <property type="method" value="EM"/>
    <property type="resolution" value="2.48 A"/>
    <property type="chains" value="P=1-102"/>
</dbReference>
<dbReference type="PDB" id="7ASN">
    <property type="method" value="EM"/>
    <property type="resolution" value="2.73 A"/>
    <property type="chains" value="P=1-102"/>
</dbReference>
<dbReference type="PDB" id="7NHL">
    <property type="method" value="EM"/>
    <property type="resolution" value="3.10 A"/>
    <property type="chains" value="U=1-102"/>
</dbReference>
<dbReference type="PDB" id="7NHM">
    <property type="method" value="EM"/>
    <property type="resolution" value="3.10 A"/>
    <property type="chains" value="U=1-102"/>
</dbReference>
<dbReference type="PDB" id="7TTU">
    <property type="method" value="EM"/>
    <property type="resolution" value="3.00 A"/>
    <property type="chains" value="D=1-102"/>
</dbReference>
<dbReference type="PDB" id="7TTW">
    <property type="method" value="EM"/>
    <property type="resolution" value="2.90 A"/>
    <property type="chains" value="D=1-102"/>
</dbReference>
<dbReference type="PDB" id="8P2F">
    <property type="method" value="EM"/>
    <property type="resolution" value="2.44 A"/>
    <property type="chains" value="U=1-102"/>
</dbReference>
<dbReference type="PDB" id="8P2G">
    <property type="method" value="EM"/>
    <property type="resolution" value="2.02 A"/>
    <property type="chains" value="U=1-102"/>
</dbReference>
<dbReference type="PDB" id="8P2H">
    <property type="method" value="EM"/>
    <property type="resolution" value="2.49 A"/>
    <property type="chains" value="U=1-102"/>
</dbReference>
<dbReference type="PDBsum" id="4WCE"/>
<dbReference type="PDBsum" id="4WF9"/>
<dbReference type="PDBsum" id="4WFA"/>
<dbReference type="PDBsum" id="4WFB"/>
<dbReference type="PDBsum" id="5HKV"/>
<dbReference type="PDBsum" id="5HL7"/>
<dbReference type="PDBsum" id="5LI0"/>
<dbReference type="PDBsum" id="5ND8"/>
<dbReference type="PDBsum" id="5ND9"/>
<dbReference type="PDBsum" id="5NRG"/>
<dbReference type="PDBsum" id="5TCU"/>
<dbReference type="PDBsum" id="6DDD"/>
<dbReference type="PDBsum" id="6DDG"/>
<dbReference type="PDBsum" id="6HMA"/>
<dbReference type="PDBsum" id="6SJ6"/>
<dbReference type="PDBsum" id="6WQN"/>
<dbReference type="PDBsum" id="6WQQ"/>
<dbReference type="PDBsum" id="6WRS"/>
<dbReference type="PDBsum" id="6WRU"/>
<dbReference type="PDBsum" id="6YEF"/>
<dbReference type="PDBsum" id="7ASM"/>
<dbReference type="PDBsum" id="7ASN"/>
<dbReference type="PDBsum" id="7NHL"/>
<dbReference type="PDBsum" id="7NHM"/>
<dbReference type="PDBsum" id="7TTU"/>
<dbReference type="PDBsum" id="7TTW"/>
<dbReference type="PDBsum" id="8P2F"/>
<dbReference type="PDBsum" id="8P2G"/>
<dbReference type="PDBsum" id="8P2H"/>
<dbReference type="EMDB" id="EMD-10212"/>
<dbReference type="EMDB" id="EMD-10791"/>
<dbReference type="EMDB" id="EMD-12332"/>
<dbReference type="EMDB" id="EMD-12333"/>
<dbReference type="EMDB" id="EMD-17363"/>
<dbReference type="EMDB" id="EMD-17364"/>
<dbReference type="EMDB" id="EMD-17365"/>
<dbReference type="EMDB" id="EMD-3624"/>
<dbReference type="EMDB" id="EMD-3625"/>
<dbReference type="EMDB" id="EMD-4050"/>
<dbReference type="EMDB" id="EMD-8402"/>
<dbReference type="SMR" id="Q2FXS8"/>
<dbReference type="IntAct" id="Q2FXS8">
    <property type="interactions" value="1"/>
</dbReference>
<dbReference type="STRING" id="93061.SAOUHSC_01757"/>
<dbReference type="PaxDb" id="1280-SAXN108_1674"/>
<dbReference type="GeneID" id="3920555"/>
<dbReference type="GeneID" id="66839833"/>
<dbReference type="KEGG" id="sao:SAOUHSC_01757"/>
<dbReference type="PATRIC" id="fig|93061.5.peg.1600"/>
<dbReference type="eggNOG" id="COG0261">
    <property type="taxonomic scope" value="Bacteria"/>
</dbReference>
<dbReference type="HOGENOM" id="CLU_061463_3_2_9"/>
<dbReference type="OrthoDB" id="9813334at2"/>
<dbReference type="EvolutionaryTrace" id="Q2FXS8"/>
<dbReference type="PRO" id="PR:Q2FXS8"/>
<dbReference type="Proteomes" id="UP000008816">
    <property type="component" value="Chromosome"/>
</dbReference>
<dbReference type="GO" id="GO:0005737">
    <property type="term" value="C:cytoplasm"/>
    <property type="evidence" value="ECO:0007669"/>
    <property type="project" value="UniProtKB-ARBA"/>
</dbReference>
<dbReference type="GO" id="GO:1990904">
    <property type="term" value="C:ribonucleoprotein complex"/>
    <property type="evidence" value="ECO:0007669"/>
    <property type="project" value="UniProtKB-KW"/>
</dbReference>
<dbReference type="GO" id="GO:0005840">
    <property type="term" value="C:ribosome"/>
    <property type="evidence" value="ECO:0007669"/>
    <property type="project" value="UniProtKB-KW"/>
</dbReference>
<dbReference type="GO" id="GO:0019843">
    <property type="term" value="F:rRNA binding"/>
    <property type="evidence" value="ECO:0007669"/>
    <property type="project" value="UniProtKB-UniRule"/>
</dbReference>
<dbReference type="GO" id="GO:0003735">
    <property type="term" value="F:structural constituent of ribosome"/>
    <property type="evidence" value="ECO:0000318"/>
    <property type="project" value="GO_Central"/>
</dbReference>
<dbReference type="GO" id="GO:0006412">
    <property type="term" value="P:translation"/>
    <property type="evidence" value="ECO:0007669"/>
    <property type="project" value="UniProtKB-UniRule"/>
</dbReference>
<dbReference type="HAMAP" id="MF_01363">
    <property type="entry name" value="Ribosomal_bL21"/>
    <property type="match status" value="1"/>
</dbReference>
<dbReference type="InterPro" id="IPR028909">
    <property type="entry name" value="bL21-like"/>
</dbReference>
<dbReference type="InterPro" id="IPR036164">
    <property type="entry name" value="bL21-like_sf"/>
</dbReference>
<dbReference type="InterPro" id="IPR001787">
    <property type="entry name" value="Ribosomal_bL21"/>
</dbReference>
<dbReference type="NCBIfam" id="TIGR00061">
    <property type="entry name" value="L21"/>
    <property type="match status" value="1"/>
</dbReference>
<dbReference type="PANTHER" id="PTHR21349">
    <property type="entry name" value="50S RIBOSOMAL PROTEIN L21"/>
    <property type="match status" value="1"/>
</dbReference>
<dbReference type="PANTHER" id="PTHR21349:SF0">
    <property type="entry name" value="LARGE RIBOSOMAL SUBUNIT PROTEIN BL21M"/>
    <property type="match status" value="1"/>
</dbReference>
<dbReference type="Pfam" id="PF00829">
    <property type="entry name" value="Ribosomal_L21p"/>
    <property type="match status" value="1"/>
</dbReference>
<dbReference type="SUPFAM" id="SSF141091">
    <property type="entry name" value="L21p-like"/>
    <property type="match status" value="1"/>
</dbReference>
<sequence length="102" mass="11333">MFAIIETGGKQIKVEEGQEIFVEKLDVNEGDTFTFDKVLFVGGDSVKVGAPTVEGATVTATVNKQGRGKKITVFTYKRRKNSKRKKGHRQPYTKLTIDKINA</sequence>
<keyword id="KW-0002">3D-structure</keyword>
<keyword id="KW-1185">Reference proteome</keyword>
<keyword id="KW-0687">Ribonucleoprotein</keyword>
<keyword id="KW-0689">Ribosomal protein</keyword>
<keyword id="KW-0694">RNA-binding</keyword>
<keyword id="KW-0699">rRNA-binding</keyword>
<organism>
    <name type="scientific">Staphylococcus aureus (strain NCTC 8325 / PS 47)</name>
    <dbReference type="NCBI Taxonomy" id="93061"/>
    <lineage>
        <taxon>Bacteria</taxon>
        <taxon>Bacillati</taxon>
        <taxon>Bacillota</taxon>
        <taxon>Bacilli</taxon>
        <taxon>Bacillales</taxon>
        <taxon>Staphylococcaceae</taxon>
        <taxon>Staphylococcus</taxon>
    </lineage>
</organism>
<reference key="1">
    <citation type="book" date="2006" name="Gram positive pathogens, 2nd edition">
        <title>The Staphylococcus aureus NCTC 8325 genome.</title>
        <editorList>
            <person name="Fischetti V."/>
            <person name="Novick R."/>
            <person name="Ferretti J."/>
            <person name="Portnoy D."/>
            <person name="Rood J."/>
        </editorList>
        <authorList>
            <person name="Gillaspy A.F."/>
            <person name="Worrell V."/>
            <person name="Orvis J."/>
            <person name="Roe B.A."/>
            <person name="Dyer D.W."/>
            <person name="Iandolo J.J."/>
        </authorList>
    </citation>
    <scope>NUCLEOTIDE SEQUENCE [LARGE SCALE GENOMIC DNA]</scope>
    <source>
        <strain>NCTC 8325 / PS 47</strain>
    </source>
</reference>
<evidence type="ECO:0000255" key="1">
    <source>
        <dbReference type="HAMAP-Rule" id="MF_01363"/>
    </source>
</evidence>
<evidence type="ECO:0000256" key="2">
    <source>
        <dbReference type="SAM" id="MobiDB-lite"/>
    </source>
</evidence>
<evidence type="ECO:0000305" key="3"/>
<evidence type="ECO:0007829" key="4">
    <source>
        <dbReference type="PDB" id="7ASM"/>
    </source>
</evidence>
<comment type="function">
    <text evidence="1">This protein binds to 23S rRNA in the presence of protein L20.</text>
</comment>
<comment type="subunit">
    <text evidence="1">Part of the 50S ribosomal subunit. Contacts protein L20.</text>
</comment>
<comment type="similarity">
    <text evidence="1">Belongs to the bacterial ribosomal protein bL21 family.</text>
</comment>
<protein>
    <recommendedName>
        <fullName evidence="1">Large ribosomal subunit protein bL21</fullName>
    </recommendedName>
    <alternativeName>
        <fullName evidence="3">50S ribosomal protein L21</fullName>
    </alternativeName>
</protein>
<name>RL21_STAA8</name>
<gene>
    <name evidence="1" type="primary">rplU</name>
    <name type="ordered locus">SAOUHSC_01757</name>
</gene>
<accession>Q2FXS8</accession>
<feature type="chain" id="PRO_0000269385" description="Large ribosomal subunit protein bL21">
    <location>
        <begin position="1"/>
        <end position="102"/>
    </location>
</feature>
<feature type="region of interest" description="Disordered" evidence="2">
    <location>
        <begin position="80"/>
        <end position="102"/>
    </location>
</feature>
<feature type="compositionally biased region" description="Basic residues" evidence="2">
    <location>
        <begin position="80"/>
        <end position="91"/>
    </location>
</feature>
<feature type="strand" evidence="4">
    <location>
        <begin position="3"/>
        <end position="7"/>
    </location>
</feature>
<feature type="strand" evidence="4">
    <location>
        <begin position="10"/>
        <end position="14"/>
    </location>
</feature>
<feature type="strand" evidence="4">
    <location>
        <begin position="19"/>
        <end position="23"/>
    </location>
</feature>
<feature type="strand" evidence="4">
    <location>
        <begin position="32"/>
        <end position="35"/>
    </location>
</feature>
<feature type="strand" evidence="4">
    <location>
        <begin position="38"/>
        <end position="41"/>
    </location>
</feature>
<feature type="strand" evidence="4">
    <location>
        <begin position="43"/>
        <end position="45"/>
    </location>
</feature>
<feature type="strand" evidence="4">
    <location>
        <begin position="50"/>
        <end position="52"/>
    </location>
</feature>
<feature type="strand" evidence="4">
    <location>
        <begin position="57"/>
        <end position="67"/>
    </location>
</feature>
<feature type="strand" evidence="4">
    <location>
        <begin position="71"/>
        <end position="77"/>
    </location>
</feature>
<feature type="turn" evidence="4">
    <location>
        <begin position="78"/>
        <end position="81"/>
    </location>
</feature>
<feature type="strand" evidence="4">
    <location>
        <begin position="82"/>
        <end position="88"/>
    </location>
</feature>
<feature type="strand" evidence="4">
    <location>
        <begin position="91"/>
        <end position="101"/>
    </location>
</feature>
<proteinExistence type="evidence at protein level"/>